<dbReference type="EC" id="3.4.23.36" evidence="1"/>
<dbReference type="EMBL" id="AE001273">
    <property type="protein sequence ID" value="AAC68005.1"/>
    <property type="molecule type" value="Genomic_DNA"/>
</dbReference>
<dbReference type="PIR" id="B71518">
    <property type="entry name" value="B71518"/>
</dbReference>
<dbReference type="RefSeq" id="NP_219918.1">
    <property type="nucleotide sequence ID" value="NC_000117.1"/>
</dbReference>
<dbReference type="RefSeq" id="WP_009871760.1">
    <property type="nucleotide sequence ID" value="NC_000117.1"/>
</dbReference>
<dbReference type="SMR" id="O84413"/>
<dbReference type="FunCoup" id="O84413">
    <property type="interactions" value="183"/>
</dbReference>
<dbReference type="STRING" id="272561.CT_408"/>
<dbReference type="EnsemblBacteria" id="AAC68005">
    <property type="protein sequence ID" value="AAC68005"/>
    <property type="gene ID" value="CT_408"/>
</dbReference>
<dbReference type="GeneID" id="884706"/>
<dbReference type="KEGG" id="ctr:CT_408"/>
<dbReference type="PATRIC" id="fig|272561.5.peg.439"/>
<dbReference type="HOGENOM" id="CLU_083252_3_0_0"/>
<dbReference type="InParanoid" id="O84413"/>
<dbReference type="OrthoDB" id="9810259at2"/>
<dbReference type="UniPathway" id="UPA00665"/>
<dbReference type="Proteomes" id="UP000000431">
    <property type="component" value="Chromosome"/>
</dbReference>
<dbReference type="GO" id="GO:0005886">
    <property type="term" value="C:plasma membrane"/>
    <property type="evidence" value="ECO:0000318"/>
    <property type="project" value="GO_Central"/>
</dbReference>
<dbReference type="GO" id="GO:0004190">
    <property type="term" value="F:aspartic-type endopeptidase activity"/>
    <property type="evidence" value="ECO:0007669"/>
    <property type="project" value="UniProtKB-UniRule"/>
</dbReference>
<dbReference type="GO" id="GO:0004175">
    <property type="term" value="F:endopeptidase activity"/>
    <property type="evidence" value="ECO:0000318"/>
    <property type="project" value="GO_Central"/>
</dbReference>
<dbReference type="GO" id="GO:0006508">
    <property type="term" value="P:proteolysis"/>
    <property type="evidence" value="ECO:0007669"/>
    <property type="project" value="UniProtKB-KW"/>
</dbReference>
<dbReference type="HAMAP" id="MF_00161">
    <property type="entry name" value="LspA"/>
    <property type="match status" value="1"/>
</dbReference>
<dbReference type="InterPro" id="IPR001872">
    <property type="entry name" value="Peptidase_A8"/>
</dbReference>
<dbReference type="NCBIfam" id="TIGR00077">
    <property type="entry name" value="lspA"/>
    <property type="match status" value="1"/>
</dbReference>
<dbReference type="PANTHER" id="PTHR33695">
    <property type="entry name" value="LIPOPROTEIN SIGNAL PEPTIDASE"/>
    <property type="match status" value="1"/>
</dbReference>
<dbReference type="PANTHER" id="PTHR33695:SF1">
    <property type="entry name" value="LIPOPROTEIN SIGNAL PEPTIDASE"/>
    <property type="match status" value="1"/>
</dbReference>
<dbReference type="Pfam" id="PF01252">
    <property type="entry name" value="Peptidase_A8"/>
    <property type="match status" value="1"/>
</dbReference>
<dbReference type="PRINTS" id="PR00781">
    <property type="entry name" value="LIPOSIGPTASE"/>
</dbReference>
<dbReference type="PROSITE" id="PS00855">
    <property type="entry name" value="SPASE_II"/>
    <property type="match status" value="1"/>
</dbReference>
<name>LSPA_CHLTR</name>
<evidence type="ECO:0000255" key="1">
    <source>
        <dbReference type="HAMAP-Rule" id="MF_00161"/>
    </source>
</evidence>
<evidence type="ECO:0000305" key="2"/>
<keyword id="KW-0064">Aspartyl protease</keyword>
<keyword id="KW-0997">Cell inner membrane</keyword>
<keyword id="KW-1003">Cell membrane</keyword>
<keyword id="KW-0378">Hydrolase</keyword>
<keyword id="KW-0472">Membrane</keyword>
<keyword id="KW-0645">Protease</keyword>
<keyword id="KW-1185">Reference proteome</keyword>
<keyword id="KW-0812">Transmembrane</keyword>
<keyword id="KW-1133">Transmembrane helix</keyword>
<feature type="chain" id="PRO_0000178777" description="Lipoprotein signal peptidase">
    <location>
        <begin position="1"/>
        <end position="167"/>
    </location>
</feature>
<feature type="transmembrane region" description="Helical" evidence="1">
    <location>
        <begin position="8"/>
        <end position="28"/>
    </location>
</feature>
<feature type="transmembrane region" description="Helical" evidence="1">
    <location>
        <begin position="46"/>
        <end position="66"/>
    </location>
</feature>
<feature type="transmembrane region" description="Helical" evidence="1">
    <location>
        <begin position="68"/>
        <end position="88"/>
    </location>
</feature>
<feature type="transmembrane region" description="Helical" evidence="1">
    <location>
        <begin position="101"/>
        <end position="121"/>
    </location>
</feature>
<feature type="transmembrane region" description="Helical" evidence="1">
    <location>
        <begin position="139"/>
        <end position="159"/>
    </location>
</feature>
<feature type="active site" evidence="1">
    <location>
        <position position="125"/>
    </location>
</feature>
<feature type="active site" evidence="1">
    <location>
        <position position="143"/>
    </location>
</feature>
<gene>
    <name evidence="1" type="primary">lspA</name>
    <name type="ordered locus">CT_408</name>
</gene>
<sequence length="167" mass="18940">MPTRSLPTFLTLLLLASIDWVSKLVVLLKSCQLSPHSSAFLYSYVWGHFSFLIIPSFNEGAAFGLFTQYKIPLLIFRVCVILGLALFLRIKYKSLHRRTRVALTLILAGALGNVGDILLYGKVVDFLSLSYYSWRFPSFNLADAFISIGTLLLIGHLYFTKESKKYF</sequence>
<reference key="1">
    <citation type="journal article" date="1998" name="Science">
        <title>Genome sequence of an obligate intracellular pathogen of humans: Chlamydia trachomatis.</title>
        <authorList>
            <person name="Stephens R.S."/>
            <person name="Kalman S."/>
            <person name="Lammel C.J."/>
            <person name="Fan J."/>
            <person name="Marathe R."/>
            <person name="Aravind L."/>
            <person name="Mitchell W.P."/>
            <person name="Olinger L."/>
            <person name="Tatusov R.L."/>
            <person name="Zhao Q."/>
            <person name="Koonin E.V."/>
            <person name="Davis R.W."/>
        </authorList>
    </citation>
    <scope>NUCLEOTIDE SEQUENCE [LARGE SCALE GENOMIC DNA]</scope>
    <source>
        <strain>ATCC VR-885 / DSM 19411 / UW-3/Cx</strain>
    </source>
</reference>
<proteinExistence type="inferred from homology"/>
<accession>O84413</accession>
<protein>
    <recommendedName>
        <fullName evidence="1">Lipoprotein signal peptidase</fullName>
        <ecNumber evidence="1">3.4.23.36</ecNumber>
    </recommendedName>
    <alternativeName>
        <fullName evidence="1">Prolipoprotein signal peptidase</fullName>
    </alternativeName>
    <alternativeName>
        <fullName evidence="1">Signal peptidase II</fullName>
        <shortName evidence="1">SPase II</shortName>
    </alternativeName>
</protein>
<comment type="function">
    <text evidence="1">This protein specifically catalyzes the removal of signal peptides from prolipoproteins.</text>
</comment>
<comment type="catalytic activity">
    <reaction evidence="1">
        <text>Release of signal peptides from bacterial membrane prolipoproteins. Hydrolyzes -Xaa-Yaa-Zaa-|-(S,diacylglyceryl)Cys-, in which Xaa is hydrophobic (preferably Leu), and Yaa (Ala or Ser) and Zaa (Gly or Ala) have small, neutral side chains.</text>
        <dbReference type="EC" id="3.4.23.36"/>
    </reaction>
</comment>
<comment type="pathway">
    <text evidence="1">Protein modification; lipoprotein biosynthesis (signal peptide cleavage).</text>
</comment>
<comment type="subcellular location">
    <subcellularLocation>
        <location evidence="1">Cell inner membrane</location>
        <topology evidence="1">Multi-pass membrane protein</topology>
    </subcellularLocation>
</comment>
<comment type="similarity">
    <text evidence="1 2">Belongs to the peptidase A8 family.</text>
</comment>
<organism>
    <name type="scientific">Chlamydia trachomatis serovar D (strain ATCC VR-885 / DSM 19411 / UW-3/Cx)</name>
    <dbReference type="NCBI Taxonomy" id="272561"/>
    <lineage>
        <taxon>Bacteria</taxon>
        <taxon>Pseudomonadati</taxon>
        <taxon>Chlamydiota</taxon>
        <taxon>Chlamydiia</taxon>
        <taxon>Chlamydiales</taxon>
        <taxon>Chlamydiaceae</taxon>
        <taxon>Chlamydia/Chlamydophila group</taxon>
        <taxon>Chlamydia</taxon>
    </lineage>
</organism>